<accession>Q9EP71</accession>
<accession>Q3URT3</accession>
<accession>Q6ZPT6</accession>
<organism>
    <name type="scientific">Mus musculus</name>
    <name type="common">Mouse</name>
    <dbReference type="NCBI Taxonomy" id="10090"/>
    <lineage>
        <taxon>Eukaryota</taxon>
        <taxon>Metazoa</taxon>
        <taxon>Chordata</taxon>
        <taxon>Craniata</taxon>
        <taxon>Vertebrata</taxon>
        <taxon>Euteleostomi</taxon>
        <taxon>Mammalia</taxon>
        <taxon>Eutheria</taxon>
        <taxon>Euarchontoglires</taxon>
        <taxon>Glires</taxon>
        <taxon>Rodentia</taxon>
        <taxon>Myomorpha</taxon>
        <taxon>Muroidea</taxon>
        <taxon>Muridae</taxon>
        <taxon>Murinae</taxon>
        <taxon>Mus</taxon>
        <taxon>Mus</taxon>
    </lineage>
</organism>
<comment type="function">
    <text evidence="2">Plays a role in actin regulation at the ectoplasmic specialization, a type of cell junction specific to testis. Important for establishment of sperm polarity and normal spermatid adhesion. May also promote integrity of Sertoli cell tight junctions at the blood-testis barrier.</text>
</comment>
<comment type="subunit">
    <text evidence="2 7">Interacts with PALLD (By similarity). Associates with actin (PubMed:11168586). However, does not bind F-actin directly (PubMed:11168586).</text>
</comment>
<comment type="subcellular location">
    <subcellularLocation>
        <location evidence="7">Cytoplasm</location>
        <location evidence="7">Cytoskeleton</location>
    </subcellularLocation>
    <subcellularLocation>
        <location evidence="7">Cytoplasm</location>
        <location evidence="7">Cytoskeleton</location>
        <location evidence="7">Stress fiber</location>
    </subcellularLocation>
    <subcellularLocation>
        <location evidence="7">Cytoplasm</location>
        <location evidence="7">Cell cortex</location>
    </subcellularLocation>
    <subcellularLocation>
        <location evidence="2">Cell junction</location>
    </subcellularLocation>
    <subcellularLocation>
        <location evidence="3">Nucleus</location>
    </subcellularLocation>
    <text evidence="2 3 7">Associated with the cortical actin cytoskeleton structures in terminal web and cell-cell adhesion sites (PubMed:11168586). Highly expressed at the ectoplasmic specialization, an actin-rich cell junction specific to the testis (By similarity). Predominantly nuclear in nonconfluent cells (By similarity).</text>
</comment>
<comment type="tissue specificity">
    <text evidence="6 7 8">Highly expressed in testis, where it localizes to seminiferous tubules (at protein level) (PubMed:11042181, PubMed:16806700). Expressed in ganglion cell layer and in Muller cell fibers of the retina (at protein level) (PubMed:11042181, PubMed:16806700). In small intestine highly expressed at the apical and lateral borders of absorptive epithelia (at protein level) (PubMed:11168586). In liver highly expressed along the bile canaliculi (at protein level) (PubMed:11168586).</text>
</comment>
<comment type="developmental stage">
    <text evidence="6">At 9.5 days, expression is detected in branchial arch mesenchyme, forebrain, hindbrain, midbrain, and neural tube. At 12.5 days, is detected in the hindbrain, forebrain, lung, genital eminence, spinal ligaments around vertebrae and ribs, and around the cartilage of ribs and nasal sinuses. Also detected in frontonasal mass, mandibular arch, optic sulcus, spinal ganglia and hind limb bud. At 15.5 days, expression is detected in the ventricular layer of neurons subjacent to the neocortex, around the nasal sinuses, bronchioles of the lung, kidney, and around the vertebrae of the tail. Also seen in the olfactory bulb.</text>
</comment>
<comment type="sequence caution" evidence="9">
    <conflict type="erroneous initiation">
        <sequence resource="EMBL-CDS" id="BAC98143"/>
    </conflict>
</comment>
<evidence type="ECO:0000250" key="1"/>
<evidence type="ECO:0000250" key="2">
    <source>
        <dbReference type="UniProtKB" id="Q5U312"/>
    </source>
</evidence>
<evidence type="ECO:0000250" key="3">
    <source>
        <dbReference type="UniProtKB" id="Q9P0K7"/>
    </source>
</evidence>
<evidence type="ECO:0000255" key="4"/>
<evidence type="ECO:0000256" key="5">
    <source>
        <dbReference type="SAM" id="MobiDB-lite"/>
    </source>
</evidence>
<evidence type="ECO:0000269" key="6">
    <source>
    </source>
</evidence>
<evidence type="ECO:0000269" key="7">
    <source>
    </source>
</evidence>
<evidence type="ECO:0000269" key="8">
    <source>
    </source>
</evidence>
<evidence type="ECO:0000305" key="9"/>
<evidence type="ECO:0007744" key="10">
    <source>
    </source>
</evidence>
<sequence length="979" mass="108852">MKSLKAKFRKSDTNEWNKNDDRLLQAVENGDAEKVASLLGKKGASATKHDSEGKTAFHLAAAKGHVECLKVMVTHGVDVTAQDSSGHSALHVAAKNGHPECIRKLLQYKSPAENIDNSGKTALHYAAAQGCLQAVQLLCEHKSPINLKDLDGNIPLLVAVQNGHSEACHFLLDHGADVNSRDKNGRTALMLACETGSSNTVDALIKKGADLSLVDSLGHNALHYSKLSENAGIQNLLLSKISQDADLKTPTKPKQHDQVSKISSERSGTPKKRKAPPPPISPTQLSDVSSPRSITSTPLSGKESVFFAEAPFKAEISSIQENKDRLSDSTAGADSLLDISSEADQQDLLVLLQAKVASLTLHNKELQDKLQAKSPKDKEAEADLSFQSFHSTQTDLAPSPGKASDIPSSDAKSSPPVEHPAGTSTTDNDVIIRQLQDSLHDLQKRLESSEAEKKQLQDELQSQRTDTLCLNNTEISENGSDLSQKLKETQSKYEEAMKEVLSVQKQMKLGLLSQESADGYSHLREAPADEDIDTLKQDLQKAVEESARNKERVRELETKLAEKEQAEATKPPAEACEELRSSYCSVIENMNKEKAFLFEKYQQAQEEIMKLKDTLKSQMPQEAPDDSGDMKEAMNRMIDELNKQVSELSQLYREAQAELEDYRKRKSLEDAAEYIHKAEHERLMHVSNLSRAKSEEALSEMKSQYSKVLNELTQLKQLVDAHKENSVSITEHLQVITTLRTTAKEMEEKISALTGHLANKEAEVAKLEKQLAEEKAAVSDAMVPKSSYEKLQASLESEVNALATKLKESVREREKAHSEVAQVRSEVSQARREKDNIQTLLKAKEQEVTALVQKFQRAQEELAGMRRCSETSSKLEEDKDEKINEMTREVLKLKEALNSLSQLSYSTSSSKRQSQQLDLLQQQVKQLQNQLAECKKHHQEVISVYRMHLLYAVQGQMDEDVQKVLKQILTMCKNQSQKK</sequence>
<feature type="chain" id="PRO_0000239631" description="Ankycorbin">
    <location>
        <begin position="1"/>
        <end position="979"/>
    </location>
</feature>
<feature type="repeat" description="ANK 1">
    <location>
        <begin position="18"/>
        <end position="51"/>
    </location>
</feature>
<feature type="repeat" description="ANK 2">
    <location>
        <begin position="52"/>
        <end position="81"/>
    </location>
</feature>
<feature type="repeat" description="ANK 3">
    <location>
        <begin position="85"/>
        <end position="114"/>
    </location>
</feature>
<feature type="repeat" description="ANK 4">
    <location>
        <begin position="118"/>
        <end position="147"/>
    </location>
</feature>
<feature type="repeat" description="ANK 5">
    <location>
        <begin position="151"/>
        <end position="180"/>
    </location>
</feature>
<feature type="repeat" description="ANK 6">
    <location>
        <begin position="184"/>
        <end position="213"/>
    </location>
</feature>
<feature type="repeat" description="ANK 7">
    <location>
        <begin position="217"/>
        <end position="247"/>
    </location>
</feature>
<feature type="region of interest" description="Disordered" evidence="5">
    <location>
        <begin position="247"/>
        <end position="299"/>
    </location>
</feature>
<feature type="region of interest" description="Disordered" evidence="5">
    <location>
        <begin position="392"/>
        <end position="429"/>
    </location>
</feature>
<feature type="region of interest" description="Disordered" evidence="5">
    <location>
        <begin position="446"/>
        <end position="467"/>
    </location>
</feature>
<feature type="coiled-coil region" evidence="4">
    <location>
        <begin position="349"/>
        <end position="374"/>
    </location>
</feature>
<feature type="coiled-coil region" evidence="4">
    <location>
        <begin position="430"/>
        <end position="943"/>
    </location>
</feature>
<feature type="short sequence motif" description="Nuclear localization signal" evidence="1">
    <location>
        <begin position="270"/>
        <end position="276"/>
    </location>
</feature>
<feature type="compositionally biased region" description="Basic and acidic residues" evidence="5">
    <location>
        <begin position="247"/>
        <end position="259"/>
    </location>
</feature>
<feature type="compositionally biased region" description="Polar residues" evidence="5">
    <location>
        <begin position="282"/>
        <end position="299"/>
    </location>
</feature>
<feature type="compositionally biased region" description="Basic and acidic residues" evidence="5">
    <location>
        <begin position="446"/>
        <end position="457"/>
    </location>
</feature>
<feature type="compositionally biased region" description="Polar residues" evidence="5">
    <location>
        <begin position="458"/>
        <end position="467"/>
    </location>
</feature>
<feature type="modified residue" description="N-acetylmethionine" evidence="3">
    <location>
        <position position="1"/>
    </location>
</feature>
<feature type="modified residue" description="Phosphoserine" evidence="3">
    <location>
        <position position="11"/>
    </location>
</feature>
<feature type="modified residue" description="Phosphothreonine" evidence="3">
    <location>
        <position position="249"/>
    </location>
</feature>
<feature type="modified residue" description="Phosphoserine" evidence="3">
    <location>
        <position position="281"/>
    </location>
</feature>
<feature type="modified residue" description="Phosphoserine" evidence="3">
    <location>
        <position position="286"/>
    </location>
</feature>
<feature type="modified residue" description="Phosphoserine" evidence="3">
    <location>
        <position position="293"/>
    </location>
</feature>
<feature type="modified residue" description="Phosphothreonine" evidence="3">
    <location>
        <position position="295"/>
    </location>
</feature>
<feature type="modified residue" description="Phosphothreonine" evidence="3">
    <location>
        <position position="297"/>
    </location>
</feature>
<feature type="modified residue" description="Phosphoserine" evidence="3">
    <location>
        <position position="300"/>
    </location>
</feature>
<feature type="modified residue" description="Phosphoserine" evidence="10">
    <location>
        <position position="304"/>
    </location>
</feature>
<feature type="modified residue" description="Phosphoserine" evidence="2">
    <location>
        <position position="318"/>
    </location>
</feature>
<feature type="modified residue" description="Phosphoserine" evidence="3">
    <location>
        <position position="327"/>
    </location>
</feature>
<feature type="modified residue" description="Phosphoserine" evidence="3">
    <location>
        <position position="329"/>
    </location>
</feature>
<feature type="modified residue" description="Phosphoserine" evidence="3">
    <location>
        <position position="340"/>
    </location>
</feature>
<feature type="modified residue" description="Phosphoserine" evidence="3">
    <location>
        <position position="341"/>
    </location>
</feature>
<feature type="modified residue" description="Phosphoserine" evidence="3">
    <location>
        <position position="358"/>
    </location>
</feature>
<feature type="modified residue" description="Phosphoserine" evidence="3">
    <location>
        <position position="513"/>
    </location>
</feature>
<feature type="modified residue" description="Phosphoserine" evidence="3">
    <location>
        <position position="516"/>
    </location>
</feature>
<feature type="modified residue" description="Phosphoserine" evidence="3">
    <location>
        <position position="667"/>
    </location>
</feature>
<feature type="modified residue" description="Phosphoserine" evidence="10">
    <location>
        <position position="694"/>
    </location>
</feature>
<feature type="modified residue" description="Phosphoserine" evidence="10">
    <location>
        <position position="914"/>
    </location>
</feature>
<feature type="sequence conflict" description="In Ref. 3; BAC98143." evidence="9" ref="3">
    <original>P</original>
    <variation>L</variation>
    <location>
        <position position="420"/>
    </location>
</feature>
<reference key="1">
    <citation type="journal article" date="2000" name="Genes Cells">
        <title>Ankycorbin: a novel actin cytoskeleton-associated protein.</title>
        <authorList>
            <person name="Peng Y.-F."/>
            <person name="Mandai K."/>
            <person name="Sakisaka T."/>
            <person name="Okabe N."/>
            <person name="Yamamoto Y."/>
            <person name="Yokoyama S."/>
            <person name="Mizoguchi A."/>
            <person name="Shiozaki H."/>
            <person name="Monden M."/>
            <person name="Takai Y."/>
        </authorList>
    </citation>
    <scope>NUCLEOTIDE SEQUENCE [MRNA]</scope>
    <scope>SUBCELLULAR LOCATION</scope>
    <scope>TISSUE SPECIFICITY</scope>
    <scope>LACK OF INTERACTION TO F-ACTIN</scope>
    <source>
        <strain>C57BL/6J</strain>
        <tissue>Kidney</tissue>
    </source>
</reference>
<reference key="2">
    <citation type="journal article" date="2001" name="J. Biol. Chem.">
        <title>Molecular characterization and developmental expression of NORPEG, a novel gene induced by retinoic acid.</title>
        <authorList>
            <person name="Kutty R.K."/>
            <person name="Kutty G."/>
            <person name="Samuel W."/>
            <person name="Duncan T."/>
            <person name="Bridges C.C."/>
            <person name="El-Sherbeeny A."/>
            <person name="Nagineni C.N."/>
            <person name="Smith S.B."/>
            <person name="Wiggert B."/>
        </authorList>
    </citation>
    <scope>NUCLEOTIDE SEQUENCE [MRNA]</scope>
    <scope>TISSUE SPECIFICITY</scope>
    <scope>DEVELOPMENTAL STAGE</scope>
</reference>
<reference key="3">
    <citation type="journal article" date="2003" name="DNA Res.">
        <title>Prediction of the coding sequences of mouse homologues of KIAA gene: III. The complete nucleotide sequences of 500 mouse KIAA-homologous cDNAs identified by screening of terminal sequences of cDNA clones randomly sampled from size-fractionated libraries.</title>
        <authorList>
            <person name="Okazaki N."/>
            <person name="Kikuno R."/>
            <person name="Ohara R."/>
            <person name="Inamoto S."/>
            <person name="Koseki H."/>
            <person name="Hiraoka S."/>
            <person name="Saga Y."/>
            <person name="Nagase T."/>
            <person name="Ohara O."/>
            <person name="Koga H."/>
        </authorList>
    </citation>
    <scope>NUCLEOTIDE SEQUENCE [LARGE SCALE MRNA]</scope>
    <source>
        <tissue>Embryonic tail</tissue>
    </source>
</reference>
<reference key="4">
    <citation type="journal article" date="2004" name="Genome Res.">
        <title>The status, quality, and expansion of the NIH full-length cDNA project: the Mammalian Gene Collection (MGC).</title>
        <authorList>
            <consortium name="The MGC Project Team"/>
        </authorList>
    </citation>
    <scope>NUCLEOTIDE SEQUENCE [LARGE SCALE MRNA]</scope>
    <source>
        <strain>C57BL/6J</strain>
        <tissue>Brain</tissue>
    </source>
</reference>
<reference key="5">
    <citation type="journal article" date="2005" name="Science">
        <title>The transcriptional landscape of the mammalian genome.</title>
        <authorList>
            <person name="Carninci P."/>
            <person name="Kasukawa T."/>
            <person name="Katayama S."/>
            <person name="Gough J."/>
            <person name="Frith M.C."/>
            <person name="Maeda N."/>
            <person name="Oyama R."/>
            <person name="Ravasi T."/>
            <person name="Lenhard B."/>
            <person name="Wells C."/>
            <person name="Kodzius R."/>
            <person name="Shimokawa K."/>
            <person name="Bajic V.B."/>
            <person name="Brenner S.E."/>
            <person name="Batalov S."/>
            <person name="Forrest A.R."/>
            <person name="Zavolan M."/>
            <person name="Davis M.J."/>
            <person name="Wilming L.G."/>
            <person name="Aidinis V."/>
            <person name="Allen J.E."/>
            <person name="Ambesi-Impiombato A."/>
            <person name="Apweiler R."/>
            <person name="Aturaliya R.N."/>
            <person name="Bailey T.L."/>
            <person name="Bansal M."/>
            <person name="Baxter L."/>
            <person name="Beisel K.W."/>
            <person name="Bersano T."/>
            <person name="Bono H."/>
            <person name="Chalk A.M."/>
            <person name="Chiu K.P."/>
            <person name="Choudhary V."/>
            <person name="Christoffels A."/>
            <person name="Clutterbuck D.R."/>
            <person name="Crowe M.L."/>
            <person name="Dalla E."/>
            <person name="Dalrymple B.P."/>
            <person name="de Bono B."/>
            <person name="Della Gatta G."/>
            <person name="di Bernardo D."/>
            <person name="Down T."/>
            <person name="Engstrom P."/>
            <person name="Fagiolini M."/>
            <person name="Faulkner G."/>
            <person name="Fletcher C.F."/>
            <person name="Fukushima T."/>
            <person name="Furuno M."/>
            <person name="Futaki S."/>
            <person name="Gariboldi M."/>
            <person name="Georgii-Hemming P."/>
            <person name="Gingeras T.R."/>
            <person name="Gojobori T."/>
            <person name="Green R.E."/>
            <person name="Gustincich S."/>
            <person name="Harbers M."/>
            <person name="Hayashi Y."/>
            <person name="Hensch T.K."/>
            <person name="Hirokawa N."/>
            <person name="Hill D."/>
            <person name="Huminiecki L."/>
            <person name="Iacono M."/>
            <person name="Ikeo K."/>
            <person name="Iwama A."/>
            <person name="Ishikawa T."/>
            <person name="Jakt M."/>
            <person name="Kanapin A."/>
            <person name="Katoh M."/>
            <person name="Kawasawa Y."/>
            <person name="Kelso J."/>
            <person name="Kitamura H."/>
            <person name="Kitano H."/>
            <person name="Kollias G."/>
            <person name="Krishnan S.P."/>
            <person name="Kruger A."/>
            <person name="Kummerfeld S.K."/>
            <person name="Kurochkin I.V."/>
            <person name="Lareau L.F."/>
            <person name="Lazarevic D."/>
            <person name="Lipovich L."/>
            <person name="Liu J."/>
            <person name="Liuni S."/>
            <person name="McWilliam S."/>
            <person name="Madan Babu M."/>
            <person name="Madera M."/>
            <person name="Marchionni L."/>
            <person name="Matsuda H."/>
            <person name="Matsuzawa S."/>
            <person name="Miki H."/>
            <person name="Mignone F."/>
            <person name="Miyake S."/>
            <person name="Morris K."/>
            <person name="Mottagui-Tabar S."/>
            <person name="Mulder N."/>
            <person name="Nakano N."/>
            <person name="Nakauchi H."/>
            <person name="Ng P."/>
            <person name="Nilsson R."/>
            <person name="Nishiguchi S."/>
            <person name="Nishikawa S."/>
            <person name="Nori F."/>
            <person name="Ohara O."/>
            <person name="Okazaki Y."/>
            <person name="Orlando V."/>
            <person name="Pang K.C."/>
            <person name="Pavan W.J."/>
            <person name="Pavesi G."/>
            <person name="Pesole G."/>
            <person name="Petrovsky N."/>
            <person name="Piazza S."/>
            <person name="Reed J."/>
            <person name="Reid J.F."/>
            <person name="Ring B.Z."/>
            <person name="Ringwald M."/>
            <person name="Rost B."/>
            <person name="Ruan Y."/>
            <person name="Salzberg S.L."/>
            <person name="Sandelin A."/>
            <person name="Schneider C."/>
            <person name="Schoenbach C."/>
            <person name="Sekiguchi K."/>
            <person name="Semple C.A."/>
            <person name="Seno S."/>
            <person name="Sessa L."/>
            <person name="Sheng Y."/>
            <person name="Shibata Y."/>
            <person name="Shimada H."/>
            <person name="Shimada K."/>
            <person name="Silva D."/>
            <person name="Sinclair B."/>
            <person name="Sperling S."/>
            <person name="Stupka E."/>
            <person name="Sugiura K."/>
            <person name="Sultana R."/>
            <person name="Takenaka Y."/>
            <person name="Taki K."/>
            <person name="Tammoja K."/>
            <person name="Tan S.L."/>
            <person name="Tang S."/>
            <person name="Taylor M.S."/>
            <person name="Tegner J."/>
            <person name="Teichmann S.A."/>
            <person name="Ueda H.R."/>
            <person name="van Nimwegen E."/>
            <person name="Verardo R."/>
            <person name="Wei C.L."/>
            <person name="Yagi K."/>
            <person name="Yamanishi H."/>
            <person name="Zabarovsky E."/>
            <person name="Zhu S."/>
            <person name="Zimmer A."/>
            <person name="Hide W."/>
            <person name="Bult C."/>
            <person name="Grimmond S.M."/>
            <person name="Teasdale R.D."/>
            <person name="Liu E.T."/>
            <person name="Brusic V."/>
            <person name="Quackenbush J."/>
            <person name="Wahlestedt C."/>
            <person name="Mattick J.S."/>
            <person name="Hume D.A."/>
            <person name="Kai C."/>
            <person name="Sasaki D."/>
            <person name="Tomaru Y."/>
            <person name="Fukuda S."/>
            <person name="Kanamori-Katayama M."/>
            <person name="Suzuki M."/>
            <person name="Aoki J."/>
            <person name="Arakawa T."/>
            <person name="Iida J."/>
            <person name="Imamura K."/>
            <person name="Itoh M."/>
            <person name="Kato T."/>
            <person name="Kawaji H."/>
            <person name="Kawagashira N."/>
            <person name="Kawashima T."/>
            <person name="Kojima M."/>
            <person name="Kondo S."/>
            <person name="Konno H."/>
            <person name="Nakano K."/>
            <person name="Ninomiya N."/>
            <person name="Nishio T."/>
            <person name="Okada M."/>
            <person name="Plessy C."/>
            <person name="Shibata K."/>
            <person name="Shiraki T."/>
            <person name="Suzuki S."/>
            <person name="Tagami M."/>
            <person name="Waki K."/>
            <person name="Watahiki A."/>
            <person name="Okamura-Oho Y."/>
            <person name="Suzuki H."/>
            <person name="Kawai J."/>
            <person name="Hayashizaki Y."/>
        </authorList>
    </citation>
    <scope>NUCLEOTIDE SEQUENCE [LARGE SCALE MRNA] OF 88-876</scope>
    <source>
        <strain>C57BL/6J</strain>
    </source>
</reference>
<reference key="6">
    <citation type="journal article" date="2006" name="Neurosci. Lett.">
        <title>Immunofluorescence analysis of the expression of Norpeg (Rai14) in retinal Mueller and ganglion cells.</title>
        <authorList>
            <person name="Kutty R.K."/>
            <person name="Samuel W."/>
            <person name="Chen S."/>
            <person name="Vijayasarathy C."/>
            <person name="Dun Y."/>
            <person name="Mysona B."/>
            <person name="Wiggert B."/>
            <person name="Smith S.B."/>
        </authorList>
    </citation>
    <scope>TISSUE SPECIFICITY</scope>
    <scope>IDENTIFICATION BY MASS SPECTROMETRY</scope>
</reference>
<reference key="7">
    <citation type="journal article" date="2010" name="Cell">
        <title>A tissue-specific atlas of mouse protein phosphorylation and expression.</title>
        <authorList>
            <person name="Huttlin E.L."/>
            <person name="Jedrychowski M.P."/>
            <person name="Elias J.E."/>
            <person name="Goswami T."/>
            <person name="Rad R."/>
            <person name="Beausoleil S.A."/>
            <person name="Villen J."/>
            <person name="Haas W."/>
            <person name="Sowa M.E."/>
            <person name="Gygi S.P."/>
        </authorList>
    </citation>
    <scope>PHOSPHORYLATION [LARGE SCALE ANALYSIS] AT SER-304; SER-694 AND SER-914</scope>
    <scope>IDENTIFICATION BY MASS SPECTROMETRY [LARGE SCALE ANALYSIS]</scope>
    <source>
        <tissue>Kidney</tissue>
        <tissue>Liver</tissue>
        <tissue>Lung</tissue>
        <tissue>Pancreas</tissue>
        <tissue>Spleen</tissue>
        <tissue>Testis</tissue>
    </source>
</reference>
<name>RAI14_MOUSE</name>
<dbReference type="EMBL" id="AF202315">
    <property type="protein sequence ID" value="AAG24483.1"/>
    <property type="molecule type" value="mRNA"/>
</dbReference>
<dbReference type="EMBL" id="AF274866">
    <property type="protein sequence ID" value="AAG25937.1"/>
    <property type="molecule type" value="mRNA"/>
</dbReference>
<dbReference type="EMBL" id="AK129333">
    <property type="protein sequence ID" value="BAC98143.1"/>
    <property type="status" value="ALT_INIT"/>
    <property type="molecule type" value="mRNA"/>
</dbReference>
<dbReference type="EMBL" id="BC052458">
    <property type="protein sequence ID" value="AAH52458.1"/>
    <property type="molecule type" value="mRNA"/>
</dbReference>
<dbReference type="EMBL" id="AK141233">
    <property type="protein sequence ID" value="BAE24605.1"/>
    <property type="molecule type" value="mRNA"/>
</dbReference>
<dbReference type="CCDS" id="CCDS37043.1"/>
<dbReference type="RefSeq" id="NP_001159880.1">
    <property type="nucleotide sequence ID" value="NM_001166408.2"/>
</dbReference>
<dbReference type="RefSeq" id="NP_109615.1">
    <property type="nucleotide sequence ID" value="NM_030690.4"/>
</dbReference>
<dbReference type="RefSeq" id="XP_006520250.1">
    <property type="nucleotide sequence ID" value="XM_006520187.2"/>
</dbReference>
<dbReference type="RefSeq" id="XP_006520251.1">
    <property type="nucleotide sequence ID" value="XM_006520188.5"/>
</dbReference>
<dbReference type="RefSeq" id="XP_017172264.1">
    <property type="nucleotide sequence ID" value="XM_017316775.2"/>
</dbReference>
<dbReference type="SMR" id="Q9EP71"/>
<dbReference type="BioGRID" id="217644">
    <property type="interactions" value="17"/>
</dbReference>
<dbReference type="FunCoup" id="Q9EP71">
    <property type="interactions" value="2143"/>
</dbReference>
<dbReference type="IntAct" id="Q9EP71">
    <property type="interactions" value="13"/>
</dbReference>
<dbReference type="MINT" id="Q9EP71"/>
<dbReference type="STRING" id="10090.ENSMUSP00000087815"/>
<dbReference type="GlyGen" id="Q9EP71">
    <property type="glycosylation" value="1 site, 1 O-linked glycan (1 site)"/>
</dbReference>
<dbReference type="iPTMnet" id="Q9EP71"/>
<dbReference type="PhosphoSitePlus" id="Q9EP71"/>
<dbReference type="SwissPalm" id="Q9EP71"/>
<dbReference type="jPOST" id="Q9EP71"/>
<dbReference type="PaxDb" id="10090-ENSMUSP00000087815"/>
<dbReference type="PeptideAtlas" id="Q9EP71"/>
<dbReference type="ProteomicsDB" id="255090"/>
<dbReference type="Pumba" id="Q9EP71"/>
<dbReference type="Antibodypedia" id="22784">
    <property type="antibodies" value="78 antibodies from 24 providers"/>
</dbReference>
<dbReference type="DNASU" id="75646"/>
<dbReference type="Ensembl" id="ENSMUST00000090339.11">
    <property type="protein sequence ID" value="ENSMUSP00000087815.4"/>
    <property type="gene ID" value="ENSMUSG00000022246.15"/>
</dbReference>
<dbReference type="Ensembl" id="ENSMUST00000169385.3">
    <property type="protein sequence ID" value="ENSMUSP00000126325.2"/>
    <property type="gene ID" value="ENSMUSG00000022246.15"/>
</dbReference>
<dbReference type="GeneID" id="75646"/>
<dbReference type="KEGG" id="mmu:75646"/>
<dbReference type="UCSC" id="uc007vgl.1">
    <property type="organism name" value="mouse"/>
</dbReference>
<dbReference type="AGR" id="MGI:1922896"/>
<dbReference type="CTD" id="26064"/>
<dbReference type="MGI" id="MGI:1922896">
    <property type="gene designation" value="Rai14"/>
</dbReference>
<dbReference type="VEuPathDB" id="HostDB:ENSMUSG00000022246"/>
<dbReference type="eggNOG" id="ENOG502QUEG">
    <property type="taxonomic scope" value="Eukaryota"/>
</dbReference>
<dbReference type="GeneTree" id="ENSGT00940000157400"/>
<dbReference type="HOGENOM" id="CLU_005323_2_0_1"/>
<dbReference type="InParanoid" id="Q9EP71"/>
<dbReference type="OMA" id="EEALCEM"/>
<dbReference type="OrthoDB" id="194358at2759"/>
<dbReference type="PhylomeDB" id="Q9EP71"/>
<dbReference type="TreeFam" id="TF331274"/>
<dbReference type="BioGRID-ORCS" id="75646">
    <property type="hits" value="1 hit in 75 CRISPR screens"/>
</dbReference>
<dbReference type="ChiTaRS" id="Rai14">
    <property type="organism name" value="mouse"/>
</dbReference>
<dbReference type="PRO" id="PR:Q9EP71"/>
<dbReference type="Proteomes" id="UP000000589">
    <property type="component" value="Chromosome 15"/>
</dbReference>
<dbReference type="RNAct" id="Q9EP71">
    <property type="molecule type" value="protein"/>
</dbReference>
<dbReference type="Bgee" id="ENSMUSG00000022246">
    <property type="expression patterns" value="Expressed in renal corpuscle and 251 other cell types or tissues"/>
</dbReference>
<dbReference type="ExpressionAtlas" id="Q9EP71">
    <property type="expression patterns" value="baseline and differential"/>
</dbReference>
<dbReference type="GO" id="GO:0070161">
    <property type="term" value="C:anchoring junction"/>
    <property type="evidence" value="ECO:0007669"/>
    <property type="project" value="UniProtKB-SubCell"/>
</dbReference>
<dbReference type="GO" id="GO:0005938">
    <property type="term" value="C:cell cortex"/>
    <property type="evidence" value="ECO:0007669"/>
    <property type="project" value="UniProtKB-SubCell"/>
</dbReference>
<dbReference type="GO" id="GO:0005829">
    <property type="term" value="C:cytosol"/>
    <property type="evidence" value="ECO:0007669"/>
    <property type="project" value="Ensembl"/>
</dbReference>
<dbReference type="GO" id="GO:0001650">
    <property type="term" value="C:fibrillar center"/>
    <property type="evidence" value="ECO:0007669"/>
    <property type="project" value="Ensembl"/>
</dbReference>
<dbReference type="GO" id="GO:0005739">
    <property type="term" value="C:mitochondrion"/>
    <property type="evidence" value="ECO:0007005"/>
    <property type="project" value="MGI"/>
</dbReference>
<dbReference type="GO" id="GO:0005654">
    <property type="term" value="C:nucleoplasm"/>
    <property type="evidence" value="ECO:0007669"/>
    <property type="project" value="Ensembl"/>
</dbReference>
<dbReference type="GO" id="GO:0001725">
    <property type="term" value="C:stress fiber"/>
    <property type="evidence" value="ECO:0007669"/>
    <property type="project" value="UniProtKB-SubCell"/>
</dbReference>
<dbReference type="GO" id="GO:0003779">
    <property type="term" value="F:actin binding"/>
    <property type="evidence" value="ECO:0007669"/>
    <property type="project" value="InterPro"/>
</dbReference>
<dbReference type="GO" id="GO:0030154">
    <property type="term" value="P:cell differentiation"/>
    <property type="evidence" value="ECO:0007669"/>
    <property type="project" value="UniProtKB-KW"/>
</dbReference>
<dbReference type="GO" id="GO:0007283">
    <property type="term" value="P:spermatogenesis"/>
    <property type="evidence" value="ECO:0007669"/>
    <property type="project" value="UniProtKB-KW"/>
</dbReference>
<dbReference type="FunFam" id="1.25.40.20:FF:000083">
    <property type="entry name" value="Uveal autoantigen with coiled-coil domains and ankyrin repeats"/>
    <property type="match status" value="1"/>
</dbReference>
<dbReference type="Gene3D" id="1.25.40.20">
    <property type="entry name" value="Ankyrin repeat-containing domain"/>
    <property type="match status" value="2"/>
</dbReference>
<dbReference type="InterPro" id="IPR002110">
    <property type="entry name" value="Ankyrin_rpt"/>
</dbReference>
<dbReference type="InterPro" id="IPR036770">
    <property type="entry name" value="Ankyrin_rpt-contain_sf"/>
</dbReference>
<dbReference type="InterPro" id="IPR042420">
    <property type="entry name" value="RAI14/UACA"/>
</dbReference>
<dbReference type="PANTHER" id="PTHR24129">
    <property type="entry name" value="ANKYCORBIN"/>
    <property type="match status" value="1"/>
</dbReference>
<dbReference type="PANTHER" id="PTHR24129:SF0">
    <property type="entry name" value="ANKYCORBIN"/>
    <property type="match status" value="1"/>
</dbReference>
<dbReference type="Pfam" id="PF00023">
    <property type="entry name" value="Ank"/>
    <property type="match status" value="1"/>
</dbReference>
<dbReference type="Pfam" id="PF12796">
    <property type="entry name" value="Ank_2"/>
    <property type="match status" value="2"/>
</dbReference>
<dbReference type="PRINTS" id="PR01415">
    <property type="entry name" value="ANKYRIN"/>
</dbReference>
<dbReference type="SMART" id="SM00248">
    <property type="entry name" value="ANK"/>
    <property type="match status" value="6"/>
</dbReference>
<dbReference type="SUPFAM" id="SSF48403">
    <property type="entry name" value="Ankyrin repeat"/>
    <property type="match status" value="1"/>
</dbReference>
<dbReference type="PROSITE" id="PS50297">
    <property type="entry name" value="ANK_REP_REGION"/>
    <property type="match status" value="1"/>
</dbReference>
<dbReference type="PROSITE" id="PS50088">
    <property type="entry name" value="ANK_REPEAT"/>
    <property type="match status" value="5"/>
</dbReference>
<keyword id="KW-0007">Acetylation</keyword>
<keyword id="KW-0040">ANK repeat</keyword>
<keyword id="KW-0965">Cell junction</keyword>
<keyword id="KW-0175">Coiled coil</keyword>
<keyword id="KW-0963">Cytoplasm</keyword>
<keyword id="KW-0206">Cytoskeleton</keyword>
<keyword id="KW-0221">Differentiation</keyword>
<keyword id="KW-0539">Nucleus</keyword>
<keyword id="KW-0597">Phosphoprotein</keyword>
<keyword id="KW-1185">Reference proteome</keyword>
<keyword id="KW-0677">Repeat</keyword>
<keyword id="KW-0744">Spermatogenesis</keyword>
<gene>
    <name type="primary">Rai14</name>
    <name type="synonym">Kiaa1334</name>
    <name type="synonym">Norpeg</name>
</gene>
<proteinExistence type="evidence at protein level"/>
<protein>
    <recommendedName>
        <fullName>Ankycorbin</fullName>
    </recommendedName>
    <alternativeName>
        <fullName>Ankyrin repeat and coiled-coil structure-containing protein</fullName>
    </alternativeName>
    <alternativeName>
        <fullName>Novel retinal pigment epithelial cell protein</fullName>
    </alternativeName>
    <alternativeName>
        <fullName>Retinoic acid-induced protein 14</fullName>
    </alternativeName>
    <alternativeName>
        <fullName>p125</fullName>
    </alternativeName>
</protein>